<proteinExistence type="evidence at protein level"/>
<organism evidence="5">
    <name type="scientific">Anethum graveolens</name>
    <name type="common">Dill</name>
    <dbReference type="NCBI Taxonomy" id="40922"/>
    <lineage>
        <taxon>Eukaryota</taxon>
        <taxon>Viridiplantae</taxon>
        <taxon>Streptophyta</taxon>
        <taxon>Embryophyta</taxon>
        <taxon>Tracheophyta</taxon>
        <taxon>Spermatophyta</taxon>
        <taxon>Magnoliopsida</taxon>
        <taxon>eudicotyledons</taxon>
        <taxon>Gunneridae</taxon>
        <taxon>Pentapetalae</taxon>
        <taxon>asterids</taxon>
        <taxon>campanulids</taxon>
        <taxon>Apiales</taxon>
        <taxon>Apiaceae</taxon>
        <taxon>Apioideae</taxon>
        <taxon>apioid superclade</taxon>
        <taxon>Apieae</taxon>
        <taxon>Anethum</taxon>
    </lineage>
</organism>
<accession>A0A0B4JDK1</accession>
<evidence type="ECO:0000250" key="1">
    <source>
        <dbReference type="UniProtKB" id="Q42952"/>
    </source>
</evidence>
<evidence type="ECO:0000255" key="2"/>
<evidence type="ECO:0000255" key="3">
    <source>
        <dbReference type="RuleBase" id="RU000628"/>
    </source>
</evidence>
<evidence type="ECO:0000269" key="4">
    <source>
    </source>
</evidence>
<evidence type="ECO:0000303" key="5">
    <source>
    </source>
</evidence>
<evidence type="ECO:0000305" key="6"/>
<evidence type="ECO:0007744" key="7">
    <source>
        <dbReference type="PDB" id="2N2Z"/>
    </source>
</evidence>
<evidence type="ECO:0007829" key="8">
    <source>
        <dbReference type="PDB" id="2N2Z"/>
    </source>
</evidence>
<protein>
    <recommendedName>
        <fullName evidence="5">Non-specific lipid-transfer protein</fullName>
        <shortName evidence="5">Ag-LTP</shortName>
    </recommendedName>
</protein>
<sequence length="122" mass="12570">MGVSRACFVVMVVVYMVVAATPNVKLAEALTCGQVTGALAPCLGYLRTAGSVPVPLTCCNGVRGLNNAARTTIDRRTACNCLKQTANAIADLNLNAAAGLPAKCGVNIPYKISPSTDCNRVV</sequence>
<name>NLTP_ANEGR</name>
<dbReference type="EMBL" id="JF823967">
    <property type="protein sequence ID" value="AEG79730.2"/>
    <property type="molecule type" value="mRNA"/>
</dbReference>
<dbReference type="PDB" id="2N2Z">
    <property type="method" value="NMR"/>
    <property type="chains" value="A=30-122"/>
</dbReference>
<dbReference type="PDBsum" id="2N2Z"/>
<dbReference type="BMRB" id="A0A0B4JDK1"/>
<dbReference type="SMR" id="A0A0B4JDK1"/>
<dbReference type="EvolutionaryTrace" id="A0A0B4JDK1"/>
<dbReference type="GO" id="GO:0008289">
    <property type="term" value="F:lipid binding"/>
    <property type="evidence" value="ECO:0007669"/>
    <property type="project" value="UniProtKB-KW"/>
</dbReference>
<dbReference type="GO" id="GO:0050832">
    <property type="term" value="P:defense response to fungus"/>
    <property type="evidence" value="ECO:0007669"/>
    <property type="project" value="UniProtKB-KW"/>
</dbReference>
<dbReference type="GO" id="GO:0031640">
    <property type="term" value="P:killing of cells of another organism"/>
    <property type="evidence" value="ECO:0007669"/>
    <property type="project" value="UniProtKB-KW"/>
</dbReference>
<dbReference type="GO" id="GO:0006869">
    <property type="term" value="P:lipid transport"/>
    <property type="evidence" value="ECO:0007669"/>
    <property type="project" value="InterPro"/>
</dbReference>
<dbReference type="CDD" id="cd01960">
    <property type="entry name" value="nsLTP1"/>
    <property type="match status" value="1"/>
</dbReference>
<dbReference type="FunFam" id="1.10.110.10:FF:000002">
    <property type="entry name" value="Non-specific lipid-transfer protein"/>
    <property type="match status" value="1"/>
</dbReference>
<dbReference type="Gene3D" id="1.10.110.10">
    <property type="entry name" value="Plant lipid-transfer and hydrophobic proteins"/>
    <property type="match status" value="1"/>
</dbReference>
<dbReference type="InterPro" id="IPR036312">
    <property type="entry name" value="Bifun_inhib/LTP/seed_sf"/>
</dbReference>
<dbReference type="InterPro" id="IPR016140">
    <property type="entry name" value="Bifunc_inhib/LTP/seed_store"/>
</dbReference>
<dbReference type="InterPro" id="IPR000528">
    <property type="entry name" value="Plant_nsLTP"/>
</dbReference>
<dbReference type="PANTHER" id="PTHR33076">
    <property type="entry name" value="NON-SPECIFIC LIPID-TRANSFER PROTEIN 2-RELATED"/>
    <property type="match status" value="1"/>
</dbReference>
<dbReference type="Pfam" id="PF00234">
    <property type="entry name" value="Tryp_alpha_amyl"/>
    <property type="match status" value="1"/>
</dbReference>
<dbReference type="PRINTS" id="PR00382">
    <property type="entry name" value="LIPIDTRNSFER"/>
</dbReference>
<dbReference type="SMART" id="SM00499">
    <property type="entry name" value="AAI"/>
    <property type="match status" value="1"/>
</dbReference>
<dbReference type="SUPFAM" id="SSF47699">
    <property type="entry name" value="Bifunctional inhibitor/lipid-transfer protein/seed storage 2S albumin"/>
    <property type="match status" value="1"/>
</dbReference>
<dbReference type="PROSITE" id="PS00597">
    <property type="entry name" value="PLANT_LTP"/>
    <property type="match status" value="1"/>
</dbReference>
<feature type="signal peptide" evidence="2">
    <location>
        <begin position="1"/>
        <end position="19"/>
    </location>
</feature>
<feature type="propeptide" id="PRO_0000436565" evidence="6">
    <location>
        <begin position="20"/>
        <end position="29"/>
    </location>
</feature>
<feature type="chain" id="PRO_0000436566" description="Non-specific lipid-transfer protein" evidence="6">
    <location>
        <begin position="30"/>
        <end position="122"/>
    </location>
</feature>
<feature type="disulfide bond" evidence="7">
    <location>
        <begin position="32"/>
        <end position="81"/>
    </location>
</feature>
<feature type="disulfide bond" evidence="7">
    <location>
        <begin position="42"/>
        <end position="58"/>
    </location>
</feature>
<feature type="disulfide bond" evidence="7">
    <location>
        <begin position="59"/>
        <end position="104"/>
    </location>
</feature>
<feature type="disulfide bond" evidence="7">
    <location>
        <begin position="79"/>
        <end position="118"/>
    </location>
</feature>
<feature type="helix" evidence="8">
    <location>
        <begin position="32"/>
        <end position="39"/>
    </location>
</feature>
<feature type="helix" evidence="8">
    <location>
        <begin position="40"/>
        <end position="42"/>
    </location>
</feature>
<feature type="helix" evidence="8">
    <location>
        <begin position="43"/>
        <end position="46"/>
    </location>
</feature>
<feature type="helix" evidence="8">
    <location>
        <begin position="56"/>
        <end position="68"/>
    </location>
</feature>
<feature type="helix" evidence="8">
    <location>
        <begin position="72"/>
        <end position="88"/>
    </location>
</feature>
<feature type="helix" evidence="8">
    <location>
        <begin position="94"/>
        <end position="104"/>
    </location>
</feature>
<feature type="turn" evidence="8">
    <location>
        <begin position="118"/>
        <end position="120"/>
    </location>
</feature>
<reference evidence="6" key="1">
    <citation type="journal article" date="2016" name="J. Pept. Sci.">
        <title>A novel lipid transfer protein from the dill Anethum graveolens L.: isolation, structure, heterologous expression, and functional characteristics.</title>
        <authorList>
            <person name="Melnikova D.N."/>
            <person name="Mineev K.S."/>
            <person name="Finkina E.I."/>
            <person name="Arseniev A.S."/>
            <person name="Ovchinnikova T.V."/>
        </authorList>
    </citation>
    <scope>NUCLEOTIDE SEQUENCE [MRNA]</scope>
    <scope>PROTEIN SEQUENCE OF 30-50</scope>
    <scope>FUNCTION</scope>
    <scope>SUBUNIT</scope>
    <scope>MASS SPECTROMETRY</scope>
    <scope>STRUCTURE BY NMR OF 30-122</scope>
    <scope>DISULFIDE BONDS</scope>
    <scope>IDENTIFICATION BY MASS SPECTROMETRY</scope>
    <source>
        <tissue evidence="5">Leaf</tissue>
    </source>
</reference>
<keyword id="KW-0002">3D-structure</keyword>
<keyword id="KW-0929">Antimicrobial</keyword>
<keyword id="KW-0903">Direct protein sequencing</keyword>
<keyword id="KW-1015">Disulfide bond</keyword>
<keyword id="KW-0295">Fungicide</keyword>
<keyword id="KW-0446">Lipid-binding</keyword>
<keyword id="KW-0732">Signal</keyword>
<keyword id="KW-0813">Transport</keyword>
<comment type="function">
    <text evidence="1 4">Plant non-specific lipid-transfer proteins transfer phospholipids as well as galactolipids across membranes. May play a role in wax or cutin deposition in the cell walls of expanding epidermal cells and certain secretory tissues (By similarity). Binds saturated fatty acids, unsaturated fatty acids, lysolipids and, with highest efficiency, jasmonic acid. Has weak antimicrobial activity against fungi. Inhibits spore germination and hyphae elongation in A.niger VKM F-2259 and N.crassa VKM F-184. Has no antibacterial activity against A.tumefaciens A281, C.michiganensis VKM Ac-144 and P.syringae VKM B-1546 (PubMed:26680443).</text>
</comment>
<comment type="subunit">
    <text evidence="4">Monomer.</text>
</comment>
<comment type="mass spectrometry" mass="9524.4" method="MALDI" evidence="4"/>
<comment type="similarity">
    <text evidence="2 3">Belongs to the plant LTP family.</text>
</comment>